<protein>
    <recommendedName>
        <fullName>Tetratricopeptide repeat protein 39C</fullName>
        <shortName>TPR repeat protein 39C</shortName>
    </recommendedName>
</protein>
<comment type="alternative products">
    <event type="alternative splicing"/>
    <isoform>
        <id>Q8N584-1</id>
        <name>1</name>
        <sequence type="displayed"/>
    </isoform>
    <isoform>
        <id>Q8N584-2</id>
        <name>2</name>
        <sequence type="described" ref="VSP_022720"/>
    </isoform>
    <isoform>
        <id>Q8N584-3</id>
        <name>3</name>
        <sequence type="described" ref="VSP_046039 VSP_046040"/>
    </isoform>
</comment>
<comment type="similarity">
    <text evidence="4">Belongs to the TTC39 family.</text>
</comment>
<comment type="sequence caution" evidence="4">
    <conflict type="erroneous initiation">
        <sequence resource="EMBL-CDS" id="AAH32684"/>
    </conflict>
</comment>
<keyword id="KW-0025">Alternative splicing</keyword>
<keyword id="KW-1267">Proteomics identification</keyword>
<keyword id="KW-1185">Reference proteome</keyword>
<keyword id="KW-0677">Repeat</keyword>
<keyword id="KW-0802">TPR repeat</keyword>
<gene>
    <name type="primary">TTC39C</name>
    <name type="synonym">C18orf17</name>
</gene>
<evidence type="ECO:0000256" key="1">
    <source>
        <dbReference type="SAM" id="MobiDB-lite"/>
    </source>
</evidence>
<evidence type="ECO:0000303" key="2">
    <source>
    </source>
</evidence>
<evidence type="ECO:0000303" key="3">
    <source>
    </source>
</evidence>
<evidence type="ECO:0000305" key="4"/>
<organism>
    <name type="scientific">Homo sapiens</name>
    <name type="common">Human</name>
    <dbReference type="NCBI Taxonomy" id="9606"/>
    <lineage>
        <taxon>Eukaryota</taxon>
        <taxon>Metazoa</taxon>
        <taxon>Chordata</taxon>
        <taxon>Craniata</taxon>
        <taxon>Vertebrata</taxon>
        <taxon>Euteleostomi</taxon>
        <taxon>Mammalia</taxon>
        <taxon>Eutheria</taxon>
        <taxon>Euarchontoglires</taxon>
        <taxon>Primates</taxon>
        <taxon>Haplorrhini</taxon>
        <taxon>Catarrhini</taxon>
        <taxon>Hominidae</taxon>
        <taxon>Homo</taxon>
    </lineage>
</organism>
<name>TT39C_HUMAN</name>
<sequence length="583" mass="65870">MAGSEQQRPRRRDDGDSDAAAAAAAPLQDAELALAGINMLLNNGFRESDQLFKQYRNHSPLMSFGASFVSFLNAMMTFEEEKMQLACDDLKTTEKLCESEEAGVIETIKNKIKKNVDVRKSAPSMVDRLQRQIIIADCQVYLAVLSFVKQELSAYIKGGWILRKAWKIYNKCYLDINALQELYQKKLTEESLTSDAANDNHIVAEGVSEESLNRLKGAVSFGYGLFHLCISMVPPNLLKIINLLGFPGDRLQGLSSLMYASESKDMKAPLATLALLWYHTVVRPFFALDGSDNKAGLDEAKEILLKKEAAYPNSSLFMFFKGRIQRLECQINSALTSFHTALELAVDQREIQHVCLYEIGWCSMIELNFKDAFDSFERLKNESRWSQCYYAYLTAVCQGATGDVDGAQIVFKEVQKLFKRKNNQIEQFSVKKAERFRKQTPTKALCVLASIEVLYLWKALPNCSFPNLQRMSQACHEVDDSSVVGLKYLLLGAIHKCLGNSEDAVQYFQRAVKDELCRQNNLYVQPYACYELGCLLLDKPETVGRGRALLLQAKEDFSGYDFENRLHVRIHAALASLRELVPQ</sequence>
<reference key="1">
    <citation type="journal article" date="2004" name="Nat. Genet.">
        <title>Complete sequencing and characterization of 21,243 full-length human cDNAs.</title>
        <authorList>
            <person name="Ota T."/>
            <person name="Suzuki Y."/>
            <person name="Nishikawa T."/>
            <person name="Otsuki T."/>
            <person name="Sugiyama T."/>
            <person name="Irie R."/>
            <person name="Wakamatsu A."/>
            <person name="Hayashi K."/>
            <person name="Sato H."/>
            <person name="Nagai K."/>
            <person name="Kimura K."/>
            <person name="Makita H."/>
            <person name="Sekine M."/>
            <person name="Obayashi M."/>
            <person name="Nishi T."/>
            <person name="Shibahara T."/>
            <person name="Tanaka T."/>
            <person name="Ishii S."/>
            <person name="Yamamoto J."/>
            <person name="Saito K."/>
            <person name="Kawai Y."/>
            <person name="Isono Y."/>
            <person name="Nakamura Y."/>
            <person name="Nagahari K."/>
            <person name="Murakami K."/>
            <person name="Yasuda T."/>
            <person name="Iwayanagi T."/>
            <person name="Wagatsuma M."/>
            <person name="Shiratori A."/>
            <person name="Sudo H."/>
            <person name="Hosoiri T."/>
            <person name="Kaku Y."/>
            <person name="Kodaira H."/>
            <person name="Kondo H."/>
            <person name="Sugawara M."/>
            <person name="Takahashi M."/>
            <person name="Kanda K."/>
            <person name="Yokoi T."/>
            <person name="Furuya T."/>
            <person name="Kikkawa E."/>
            <person name="Omura Y."/>
            <person name="Abe K."/>
            <person name="Kamihara K."/>
            <person name="Katsuta N."/>
            <person name="Sato K."/>
            <person name="Tanikawa M."/>
            <person name="Yamazaki M."/>
            <person name="Ninomiya K."/>
            <person name="Ishibashi T."/>
            <person name="Yamashita H."/>
            <person name="Murakawa K."/>
            <person name="Fujimori K."/>
            <person name="Tanai H."/>
            <person name="Kimata M."/>
            <person name="Watanabe M."/>
            <person name="Hiraoka S."/>
            <person name="Chiba Y."/>
            <person name="Ishida S."/>
            <person name="Ono Y."/>
            <person name="Takiguchi S."/>
            <person name="Watanabe S."/>
            <person name="Yosida M."/>
            <person name="Hotuta T."/>
            <person name="Kusano J."/>
            <person name="Kanehori K."/>
            <person name="Takahashi-Fujii A."/>
            <person name="Hara H."/>
            <person name="Tanase T.-O."/>
            <person name="Nomura Y."/>
            <person name="Togiya S."/>
            <person name="Komai F."/>
            <person name="Hara R."/>
            <person name="Takeuchi K."/>
            <person name="Arita M."/>
            <person name="Imose N."/>
            <person name="Musashino K."/>
            <person name="Yuuki H."/>
            <person name="Oshima A."/>
            <person name="Sasaki N."/>
            <person name="Aotsuka S."/>
            <person name="Yoshikawa Y."/>
            <person name="Matsunawa H."/>
            <person name="Ichihara T."/>
            <person name="Shiohata N."/>
            <person name="Sano S."/>
            <person name="Moriya S."/>
            <person name="Momiyama H."/>
            <person name="Satoh N."/>
            <person name="Takami S."/>
            <person name="Terashima Y."/>
            <person name="Suzuki O."/>
            <person name="Nakagawa S."/>
            <person name="Senoh A."/>
            <person name="Mizoguchi H."/>
            <person name="Goto Y."/>
            <person name="Shimizu F."/>
            <person name="Wakebe H."/>
            <person name="Hishigaki H."/>
            <person name="Watanabe T."/>
            <person name="Sugiyama A."/>
            <person name="Takemoto M."/>
            <person name="Kawakami B."/>
            <person name="Yamazaki M."/>
            <person name="Watanabe K."/>
            <person name="Kumagai A."/>
            <person name="Itakura S."/>
            <person name="Fukuzumi Y."/>
            <person name="Fujimori Y."/>
            <person name="Komiyama M."/>
            <person name="Tashiro H."/>
            <person name="Tanigami A."/>
            <person name="Fujiwara T."/>
            <person name="Ono T."/>
            <person name="Yamada K."/>
            <person name="Fujii Y."/>
            <person name="Ozaki K."/>
            <person name="Hirao M."/>
            <person name="Ohmori Y."/>
            <person name="Kawabata A."/>
            <person name="Hikiji T."/>
            <person name="Kobatake N."/>
            <person name="Inagaki H."/>
            <person name="Ikema Y."/>
            <person name="Okamoto S."/>
            <person name="Okitani R."/>
            <person name="Kawakami T."/>
            <person name="Noguchi S."/>
            <person name="Itoh T."/>
            <person name="Shigeta K."/>
            <person name="Senba T."/>
            <person name="Matsumura K."/>
            <person name="Nakajima Y."/>
            <person name="Mizuno T."/>
            <person name="Morinaga M."/>
            <person name="Sasaki M."/>
            <person name="Togashi T."/>
            <person name="Oyama M."/>
            <person name="Hata H."/>
            <person name="Watanabe M."/>
            <person name="Komatsu T."/>
            <person name="Mizushima-Sugano J."/>
            <person name="Satoh T."/>
            <person name="Shirai Y."/>
            <person name="Takahashi Y."/>
            <person name="Nakagawa K."/>
            <person name="Okumura K."/>
            <person name="Nagase T."/>
            <person name="Nomura N."/>
            <person name="Kikuchi H."/>
            <person name="Masuho Y."/>
            <person name="Yamashita R."/>
            <person name="Nakai K."/>
            <person name="Yada T."/>
            <person name="Nakamura Y."/>
            <person name="Ohara O."/>
            <person name="Isogai T."/>
            <person name="Sugano S."/>
        </authorList>
    </citation>
    <scope>NUCLEOTIDE SEQUENCE [LARGE SCALE MRNA] (ISOFORM 2)</scope>
    <source>
        <tissue>Corpus callosum</tissue>
    </source>
</reference>
<reference key="2">
    <citation type="journal article" date="2005" name="Nature">
        <title>DNA sequence and analysis of human chromosome 18.</title>
        <authorList>
            <person name="Nusbaum C."/>
            <person name="Zody M.C."/>
            <person name="Borowsky M.L."/>
            <person name="Kamal M."/>
            <person name="Kodira C.D."/>
            <person name="Taylor T.D."/>
            <person name="Whittaker C.A."/>
            <person name="Chang J.L."/>
            <person name="Cuomo C.A."/>
            <person name="Dewar K."/>
            <person name="FitzGerald M.G."/>
            <person name="Yang X."/>
            <person name="Abouelleil A."/>
            <person name="Allen N.R."/>
            <person name="Anderson S."/>
            <person name="Bloom T."/>
            <person name="Bugalter B."/>
            <person name="Butler J."/>
            <person name="Cook A."/>
            <person name="DeCaprio D."/>
            <person name="Engels R."/>
            <person name="Garber M."/>
            <person name="Gnirke A."/>
            <person name="Hafez N."/>
            <person name="Hall J.L."/>
            <person name="Norman C.H."/>
            <person name="Itoh T."/>
            <person name="Jaffe D.B."/>
            <person name="Kuroki Y."/>
            <person name="Lehoczky J."/>
            <person name="Lui A."/>
            <person name="Macdonald P."/>
            <person name="Mauceli E."/>
            <person name="Mikkelsen T.S."/>
            <person name="Naylor J.W."/>
            <person name="Nicol R."/>
            <person name="Nguyen C."/>
            <person name="Noguchi H."/>
            <person name="O'Leary S.B."/>
            <person name="Piqani B."/>
            <person name="Smith C.L."/>
            <person name="Talamas J.A."/>
            <person name="Topham K."/>
            <person name="Totoki Y."/>
            <person name="Toyoda A."/>
            <person name="Wain H.M."/>
            <person name="Young S.K."/>
            <person name="Zeng Q."/>
            <person name="Zimmer A.R."/>
            <person name="Fujiyama A."/>
            <person name="Hattori M."/>
            <person name="Birren B.W."/>
            <person name="Sakaki Y."/>
            <person name="Lander E.S."/>
        </authorList>
    </citation>
    <scope>NUCLEOTIDE SEQUENCE [LARGE SCALE GENOMIC DNA]</scope>
</reference>
<reference key="3">
    <citation type="journal article" date="2004" name="Genome Res.">
        <title>The status, quality, and expansion of the NIH full-length cDNA project: the Mammalian Gene Collection (MGC).</title>
        <authorList>
            <consortium name="The MGC Project Team"/>
        </authorList>
    </citation>
    <scope>NUCLEOTIDE SEQUENCE [LARGE SCALE MRNA] (ISOFORMS 2 AND 3)</scope>
    <scope>NUCLEOTIDE SEQUENCE [LARGE SCALE MRNA] OF 38-583 (ISOFORM 1)</scope>
    <source>
        <tissue>Ovarian adenocarcinoma</tissue>
        <tissue>Testis</tissue>
    </source>
</reference>
<accession>Q8N584</accession>
<accession>B7WP63</accession>
<accession>J3QRR1</accession>
<accession>Q0VAJ2</accession>
<accession>Q8N284</accession>
<feature type="chain" id="PRO_0000274352" description="Tetratricopeptide repeat protein 39C">
    <location>
        <begin position="1"/>
        <end position="583"/>
    </location>
</feature>
<feature type="repeat" description="TPR 1">
    <location>
        <begin position="315"/>
        <end position="348"/>
    </location>
</feature>
<feature type="repeat" description="TPR 2">
    <location>
        <begin position="353"/>
        <end position="386"/>
    </location>
</feature>
<feature type="repeat" description="TPR 3">
    <location>
        <begin position="485"/>
        <end position="518"/>
    </location>
</feature>
<feature type="region of interest" description="Disordered" evidence="1">
    <location>
        <begin position="1"/>
        <end position="22"/>
    </location>
</feature>
<feature type="splice variant" id="VSP_022720" description="In isoform 2." evidence="2 3">
    <location>
        <begin position="1"/>
        <end position="61"/>
    </location>
</feature>
<feature type="splice variant" id="VSP_046039" description="In isoform 3." evidence="3">
    <original>NHSPLMSFGASFVSFLNAMM</original>
    <variation>KSFLTSEKTSALPGETQRRL</variation>
    <location>
        <begin position="57"/>
        <end position="76"/>
    </location>
</feature>
<feature type="splice variant" id="VSP_046040" description="In isoform 3." evidence="3">
    <location>
        <begin position="77"/>
        <end position="583"/>
    </location>
</feature>
<feature type="sequence conflict" description="In Ref. 1; BAC03578." evidence="4" ref="1">
    <original>E</original>
    <variation>G</variation>
    <location>
        <position position="210"/>
    </location>
</feature>
<feature type="sequence conflict" description="In Ref. 1; BAC03578." evidence="4" ref="1">
    <original>E</original>
    <variation>V</variation>
    <location>
        <position position="262"/>
    </location>
</feature>
<proteinExistence type="evidence at protein level"/>
<dbReference type="EMBL" id="AK091080">
    <property type="protein sequence ID" value="BAC03578.1"/>
    <property type="molecule type" value="mRNA"/>
</dbReference>
<dbReference type="EMBL" id="AC010754">
    <property type="status" value="NOT_ANNOTATED_CDS"/>
    <property type="molecule type" value="Genomic_DNA"/>
</dbReference>
<dbReference type="EMBL" id="AC090772">
    <property type="status" value="NOT_ANNOTATED_CDS"/>
    <property type="molecule type" value="Genomic_DNA"/>
</dbReference>
<dbReference type="EMBL" id="BC016833">
    <property type="status" value="NOT_ANNOTATED_CDS"/>
    <property type="molecule type" value="mRNA"/>
</dbReference>
<dbReference type="EMBL" id="BC032684">
    <property type="protein sequence ID" value="AAH32684.1"/>
    <property type="status" value="ALT_INIT"/>
    <property type="molecule type" value="mRNA"/>
</dbReference>
<dbReference type="EMBL" id="BC121034">
    <property type="protein sequence ID" value="AAI21035.1"/>
    <property type="molecule type" value="mRNA"/>
</dbReference>
<dbReference type="EMBL" id="BC121035">
    <property type="protein sequence ID" value="AAI21036.1"/>
    <property type="molecule type" value="mRNA"/>
</dbReference>
<dbReference type="CCDS" id="CCDS32804.1">
    <molecule id="Q8N584-2"/>
</dbReference>
<dbReference type="CCDS" id="CCDS45839.1">
    <molecule id="Q8N584-1"/>
</dbReference>
<dbReference type="CCDS" id="CCDS58616.1">
    <molecule id="Q8N584-3"/>
</dbReference>
<dbReference type="RefSeq" id="NP_001129465.1">
    <molecule id="Q8N584-1"/>
    <property type="nucleotide sequence ID" value="NM_001135993.2"/>
</dbReference>
<dbReference type="RefSeq" id="NP_001230354.1">
    <molecule id="Q8N584-3"/>
    <property type="nucleotide sequence ID" value="NM_001243425.2"/>
</dbReference>
<dbReference type="RefSeq" id="NP_001278959.1">
    <property type="nucleotide sequence ID" value="NM_001292030.1"/>
</dbReference>
<dbReference type="RefSeq" id="NP_694943.2">
    <molecule id="Q8N584-2"/>
    <property type="nucleotide sequence ID" value="NM_153211.4"/>
</dbReference>
<dbReference type="RefSeq" id="XP_005258255.1">
    <property type="nucleotide sequence ID" value="XM_005258198.4"/>
</dbReference>
<dbReference type="RefSeq" id="XP_016881039.1">
    <property type="nucleotide sequence ID" value="XM_017025550.1"/>
</dbReference>
<dbReference type="RefSeq" id="XP_047293253.1">
    <molecule id="Q8N584-2"/>
    <property type="nucleotide sequence ID" value="XM_047437297.1"/>
</dbReference>
<dbReference type="RefSeq" id="XP_047293254.1">
    <molecule id="Q8N584-2"/>
    <property type="nucleotide sequence ID" value="XM_047437298.1"/>
</dbReference>
<dbReference type="RefSeq" id="XP_054174172.1">
    <molecule id="Q8N584-2"/>
    <property type="nucleotide sequence ID" value="XM_054318197.1"/>
</dbReference>
<dbReference type="RefSeq" id="XP_054174173.1">
    <molecule id="Q8N584-2"/>
    <property type="nucleotide sequence ID" value="XM_054318198.1"/>
</dbReference>
<dbReference type="SMR" id="Q8N584"/>
<dbReference type="BioGRID" id="125929">
    <property type="interactions" value="12"/>
</dbReference>
<dbReference type="FunCoup" id="Q8N584">
    <property type="interactions" value="52"/>
</dbReference>
<dbReference type="IntAct" id="Q8N584">
    <property type="interactions" value="3"/>
</dbReference>
<dbReference type="STRING" id="9606.ENSP00000323645"/>
<dbReference type="GlyGen" id="Q8N584">
    <property type="glycosylation" value="1 site, 1 N-linked glycan (1 site)"/>
</dbReference>
<dbReference type="iPTMnet" id="Q8N584"/>
<dbReference type="PhosphoSitePlus" id="Q8N584"/>
<dbReference type="BioMuta" id="TTC39C"/>
<dbReference type="DMDM" id="125863935"/>
<dbReference type="jPOST" id="Q8N584"/>
<dbReference type="MassIVE" id="Q8N584"/>
<dbReference type="PaxDb" id="9606-ENSP00000323645"/>
<dbReference type="PeptideAtlas" id="Q8N584"/>
<dbReference type="ProteomicsDB" id="72019">
    <molecule id="Q8N584-1"/>
</dbReference>
<dbReference type="ProteomicsDB" id="72020">
    <molecule id="Q8N584-2"/>
</dbReference>
<dbReference type="Pumba" id="Q8N584"/>
<dbReference type="Antibodypedia" id="70687">
    <property type="antibodies" value="20 antibodies from 9 providers"/>
</dbReference>
<dbReference type="DNASU" id="125488"/>
<dbReference type="Ensembl" id="ENST00000304621.10">
    <molecule id="Q8N584-2"/>
    <property type="protein sequence ID" value="ENSP00000306598.6"/>
    <property type="gene ID" value="ENSG00000168234.14"/>
</dbReference>
<dbReference type="Ensembl" id="ENST00000317571.8">
    <molecule id="Q8N584-1"/>
    <property type="protein sequence ID" value="ENSP00000323645.3"/>
    <property type="gene ID" value="ENSG00000168234.14"/>
</dbReference>
<dbReference type="Ensembl" id="ENST00000584250.2">
    <molecule id="Q8N584-3"/>
    <property type="protein sequence ID" value="ENSP00000464344.1"/>
    <property type="gene ID" value="ENSG00000168234.14"/>
</dbReference>
<dbReference type="GeneID" id="125488"/>
<dbReference type="KEGG" id="hsa:125488"/>
<dbReference type="MANE-Select" id="ENST00000317571.8">
    <property type="protein sequence ID" value="ENSP00000323645.3"/>
    <property type="RefSeq nucleotide sequence ID" value="NM_001135993.2"/>
    <property type="RefSeq protein sequence ID" value="NP_001129465.1"/>
</dbReference>
<dbReference type="UCSC" id="uc002kuu.4">
    <molecule id="Q8N584-1"/>
    <property type="organism name" value="human"/>
</dbReference>
<dbReference type="AGR" id="HGNC:26595"/>
<dbReference type="CTD" id="125488"/>
<dbReference type="DisGeNET" id="125488"/>
<dbReference type="GeneCards" id="TTC39C"/>
<dbReference type="HGNC" id="HGNC:26595">
    <property type="gene designation" value="TTC39C"/>
</dbReference>
<dbReference type="HPA" id="ENSG00000168234">
    <property type="expression patterns" value="Tissue enhanced (liver, retina)"/>
</dbReference>
<dbReference type="neXtProt" id="NX_Q8N584"/>
<dbReference type="OpenTargets" id="ENSG00000168234"/>
<dbReference type="PharmGKB" id="PA162407262"/>
<dbReference type="VEuPathDB" id="HostDB:ENSG00000168234"/>
<dbReference type="eggNOG" id="KOG3783">
    <property type="taxonomic scope" value="Eukaryota"/>
</dbReference>
<dbReference type="GeneTree" id="ENSGT00950000182917"/>
<dbReference type="HOGENOM" id="CLU_010086_4_1_1"/>
<dbReference type="InParanoid" id="Q8N584"/>
<dbReference type="OMA" id="YNIAMKQ"/>
<dbReference type="OrthoDB" id="2154985at2759"/>
<dbReference type="PAN-GO" id="Q8N584">
    <property type="GO annotations" value="2 GO annotations based on evolutionary models"/>
</dbReference>
<dbReference type="PhylomeDB" id="Q8N584"/>
<dbReference type="TreeFam" id="TF313761"/>
<dbReference type="PathwayCommons" id="Q8N584"/>
<dbReference type="SignaLink" id="Q8N584"/>
<dbReference type="BioGRID-ORCS" id="125488">
    <property type="hits" value="13 hits in 1138 CRISPR screens"/>
</dbReference>
<dbReference type="ChiTaRS" id="TTC39C">
    <property type="organism name" value="human"/>
</dbReference>
<dbReference type="GenomeRNAi" id="125488"/>
<dbReference type="Pharos" id="Q8N584">
    <property type="development level" value="Tdark"/>
</dbReference>
<dbReference type="PRO" id="PR:Q8N584"/>
<dbReference type="Proteomes" id="UP000005640">
    <property type="component" value="Chromosome 18"/>
</dbReference>
<dbReference type="RNAct" id="Q8N584">
    <property type="molecule type" value="protein"/>
</dbReference>
<dbReference type="Bgee" id="ENSG00000168234">
    <property type="expression patterns" value="Expressed in right lobe of liver and 165 other cell types or tissues"/>
</dbReference>
<dbReference type="ExpressionAtlas" id="Q8N584">
    <property type="expression patterns" value="baseline and differential"/>
</dbReference>
<dbReference type="GO" id="GO:0060271">
    <property type="term" value="P:cilium assembly"/>
    <property type="evidence" value="ECO:0000318"/>
    <property type="project" value="GO_Central"/>
</dbReference>
<dbReference type="GO" id="GO:0032474">
    <property type="term" value="P:otolith morphogenesis"/>
    <property type="evidence" value="ECO:0000318"/>
    <property type="project" value="GO_Central"/>
</dbReference>
<dbReference type="Gene3D" id="1.25.40.10">
    <property type="entry name" value="Tetratricopeptide repeat domain"/>
    <property type="match status" value="1"/>
</dbReference>
<dbReference type="InterPro" id="IPR019412">
    <property type="entry name" value="Iml2/TPR_39"/>
</dbReference>
<dbReference type="InterPro" id="IPR011990">
    <property type="entry name" value="TPR-like_helical_dom_sf"/>
</dbReference>
<dbReference type="PANTHER" id="PTHR31859">
    <property type="entry name" value="TETRATRICOPEPTIDE REPEAT PROTEIN 39 FAMILY MEMBER"/>
    <property type="match status" value="1"/>
</dbReference>
<dbReference type="PANTHER" id="PTHR31859:SF1">
    <property type="entry name" value="TETRATRICOPEPTIDE REPEAT PROTEIN 39C"/>
    <property type="match status" value="1"/>
</dbReference>
<dbReference type="Pfam" id="PF10300">
    <property type="entry name" value="Iml2-TPR_39"/>
    <property type="match status" value="1"/>
</dbReference>
<dbReference type="SUPFAM" id="SSF48452">
    <property type="entry name" value="TPR-like"/>
    <property type="match status" value="1"/>
</dbReference>